<evidence type="ECO:0000250" key="1">
    <source>
        <dbReference type="UniProtKB" id="D3ZZN9"/>
    </source>
</evidence>
<evidence type="ECO:0000250" key="2">
    <source>
        <dbReference type="UniProtKB" id="Q9DBZ9"/>
    </source>
</evidence>
<evidence type="ECO:0000255" key="3">
    <source>
        <dbReference type="PROSITE-ProRule" id="PRU00041"/>
    </source>
</evidence>
<evidence type="ECO:0000255" key="4">
    <source>
        <dbReference type="PROSITE-ProRule" id="PRU00172"/>
    </source>
</evidence>
<evidence type="ECO:0000256" key="5">
    <source>
        <dbReference type="SAM" id="MobiDB-lite"/>
    </source>
</evidence>
<evidence type="ECO:0000269" key="6">
    <source>
    </source>
</evidence>
<evidence type="ECO:0000269" key="7">
    <source>
    </source>
</evidence>
<evidence type="ECO:0000303" key="8">
    <source>
    </source>
</evidence>
<evidence type="ECO:0007744" key="9">
    <source>
    </source>
</evidence>
<evidence type="ECO:0007744" key="10">
    <source>
    </source>
</evidence>
<evidence type="ECO:0007744" key="11">
    <source>
    </source>
</evidence>
<keyword id="KW-0025">Alternative splicing</keyword>
<keyword id="KW-0343">GTPase activation</keyword>
<keyword id="KW-0449">Lipoprotein</keyword>
<keyword id="KW-0564">Palmitate</keyword>
<keyword id="KW-0597">Phosphoprotein</keyword>
<keyword id="KW-1267">Proteomics identification</keyword>
<keyword id="KW-1185">Reference proteome</keyword>
<accession>Q6ZW31</accession>
<accession>Q7L2I8</accession>
<accession>Q8N6J2</accession>
<accession>Q9H8K4</accession>
<sequence>MAEPLLRKTFSRLRGREKLPRKKSDAKERGHPAQRPEPSPPEPEPQAPEGSQAGAEGPSSPEASRSPARGAYLQSLEPSSRRWVLGGAKPAEDTSLGPGVPGTGEPAGEIWYNPIPEEDPRPPAPEPPGPQPGSAESEGLAPQGAAPASPPTKASRTKSPGPARRLSIKMKKLPELRRRLSLRGPRAGRERERAAPAGSVISRYHLDSSVGGPGPAAGPGGTRSPRAGYLSDGDSPERPAGPPSPTSFRPYEVGPAARAPPAALWGRLSLHLYGLGGLRPAPGATPRDLCCLLQVDGEARARTGPLRGGPDFLRLDHTFHLELEAARLLRALVLAWDPGVRRHRPCAQGTVLLPTVFRGCQAQQLAVRLEPQGLLYAKLTLSEQQEAPATAEPRVFGLPLPLLVERERPPGQVPLIIQKCVGQIERRGLRVVGLYRLCGSAAVKKELRDAFERDSAAVCLSEDLYPDINVITGILKDYLRELPTPLITQPLYKVVLEAMARDPPNRVPPTTEGTRGLLSCLPDVERATLTLLLDHLRLVSSFHAYNRMTPQNLAVCFGPVLLPARQAPTRPRARSSGPGLASAVDFKHHIEVLHYLLQSWPDPRLPRQSPDVAPYLRPKRQPPLHLPLADPEVVTRPRGRGGPESPPSNRYAGDWSVCGRDFLPCGRDFLSGPDYDHVTGSDSEDEDEEVGEPRVTGDFEDDFDAPFNPHLNLKDFDALILDLERELSKQINVCL</sequence>
<proteinExistence type="evidence at protein level"/>
<comment type="function">
    <text evidence="7">GTPase activator for the Rho-type GTPases. As a GCM1 downstream effector, it is involved in placental development and positively regulates trophoblast cells migration. It regulates cytoskeletal remodeling by controlling the activity of Rho GTPases including RHOA, CDC42 and RAC1 (PubMed:27917469).</text>
</comment>
<comment type="alternative products">
    <event type="alternative splicing"/>
    <isoform>
        <id>Q6ZW31-1</id>
        <name>1</name>
        <sequence type="displayed"/>
    </isoform>
    <isoform>
        <id>Q6ZW31-2</id>
        <name>2</name>
        <sequence type="described" ref="VSP_029717"/>
    </isoform>
</comment>
<comment type="tissue specificity">
    <text evidence="7">Expressed in trophoblast cells of placental villi.</text>
</comment>
<comment type="PTM">
    <text evidence="1">Palmitoylated. Probably palmitoylated by ZDHHC3 and ZDHHC7.</text>
</comment>
<dbReference type="EMBL" id="AK023573">
    <property type="protein sequence ID" value="BAB14612.1"/>
    <property type="molecule type" value="mRNA"/>
</dbReference>
<dbReference type="EMBL" id="AK123686">
    <property type="protein sequence ID" value="BAC85676.1"/>
    <property type="molecule type" value="mRNA"/>
</dbReference>
<dbReference type="EMBL" id="CH471106">
    <property type="protein sequence ID" value="EAW84462.1"/>
    <property type="molecule type" value="Genomic_DNA"/>
</dbReference>
<dbReference type="EMBL" id="CH471106">
    <property type="protein sequence ID" value="EAW84463.1"/>
    <property type="molecule type" value="Genomic_DNA"/>
</dbReference>
<dbReference type="EMBL" id="BC018942">
    <property type="protein sequence ID" value="AAH18942.2"/>
    <property type="molecule type" value="mRNA"/>
</dbReference>
<dbReference type="EMBL" id="BC029926">
    <property type="protein sequence ID" value="AAH29926.1"/>
    <property type="molecule type" value="mRNA"/>
</dbReference>
<dbReference type="CCDS" id="CCDS12324.1">
    <molecule id="Q6ZW31-1"/>
</dbReference>
<dbReference type="CCDS" id="CCDS74299.1">
    <molecule id="Q6ZW31-2"/>
</dbReference>
<dbReference type="RefSeq" id="NP_001287839.1">
    <molecule id="Q6ZW31-2"/>
    <property type="nucleotide sequence ID" value="NM_001300910.2"/>
</dbReference>
<dbReference type="RefSeq" id="NP_149014.3">
    <molecule id="Q6ZW31-1"/>
    <property type="nucleotide sequence ID" value="NM_033025.5"/>
</dbReference>
<dbReference type="SMR" id="Q6ZW31"/>
<dbReference type="BioGRID" id="124489">
    <property type="interactions" value="117"/>
</dbReference>
<dbReference type="FunCoup" id="Q6ZW31">
    <property type="interactions" value="194"/>
</dbReference>
<dbReference type="IntAct" id="Q6ZW31">
    <property type="interactions" value="59"/>
</dbReference>
<dbReference type="STRING" id="9606.ENSP00000341489"/>
<dbReference type="GlyGen" id="Q6ZW31">
    <property type="glycosylation" value="1 site, 1 O-linked glycan (1 site)"/>
</dbReference>
<dbReference type="iPTMnet" id="Q6ZW31"/>
<dbReference type="PhosphoSitePlus" id="Q6ZW31"/>
<dbReference type="BioMuta" id="SYDE1"/>
<dbReference type="DMDM" id="74723056"/>
<dbReference type="jPOST" id="Q6ZW31"/>
<dbReference type="MassIVE" id="Q6ZW31"/>
<dbReference type="PaxDb" id="9606-ENSP00000341489"/>
<dbReference type="PeptideAtlas" id="Q6ZW31"/>
<dbReference type="ProteomicsDB" id="68453">
    <molecule id="Q6ZW31-1"/>
</dbReference>
<dbReference type="ProteomicsDB" id="68454">
    <molecule id="Q6ZW31-2"/>
</dbReference>
<dbReference type="Pumba" id="Q6ZW31"/>
<dbReference type="Antibodypedia" id="2829">
    <property type="antibodies" value="114 antibodies from 19 providers"/>
</dbReference>
<dbReference type="DNASU" id="85360"/>
<dbReference type="Ensembl" id="ENST00000342784.7">
    <molecule id="Q6ZW31-1"/>
    <property type="protein sequence ID" value="ENSP00000341489.1"/>
    <property type="gene ID" value="ENSG00000105137.13"/>
</dbReference>
<dbReference type="Ensembl" id="ENST00000600440.5">
    <molecule id="Q6ZW31-2"/>
    <property type="protein sequence ID" value="ENSP00000470733.1"/>
    <property type="gene ID" value="ENSG00000105137.13"/>
</dbReference>
<dbReference type="GeneID" id="85360"/>
<dbReference type="KEGG" id="hsa:85360"/>
<dbReference type="MANE-Select" id="ENST00000342784.7">
    <property type="protein sequence ID" value="ENSP00000341489.1"/>
    <property type="RefSeq nucleotide sequence ID" value="NM_033025.6"/>
    <property type="RefSeq protein sequence ID" value="NP_149014.3"/>
</dbReference>
<dbReference type="UCSC" id="uc002nah.2">
    <molecule id="Q6ZW31-1"/>
    <property type="organism name" value="human"/>
</dbReference>
<dbReference type="AGR" id="HGNC:25824"/>
<dbReference type="CTD" id="85360"/>
<dbReference type="DisGeNET" id="85360"/>
<dbReference type="GeneCards" id="SYDE1"/>
<dbReference type="HGNC" id="HGNC:25824">
    <property type="gene designation" value="SYDE1"/>
</dbReference>
<dbReference type="HPA" id="ENSG00000105137">
    <property type="expression patterns" value="Low tissue specificity"/>
</dbReference>
<dbReference type="MIM" id="617377">
    <property type="type" value="gene"/>
</dbReference>
<dbReference type="neXtProt" id="NX_Q6ZW31"/>
<dbReference type="OpenTargets" id="ENSG00000105137"/>
<dbReference type="PharmGKB" id="PA142670851"/>
<dbReference type="VEuPathDB" id="HostDB:ENSG00000105137"/>
<dbReference type="eggNOG" id="KOG1452">
    <property type="taxonomic scope" value="Eukaryota"/>
</dbReference>
<dbReference type="GeneTree" id="ENSGT01030000234635"/>
<dbReference type="HOGENOM" id="CLU_005764_1_1_1"/>
<dbReference type="InParanoid" id="Q6ZW31"/>
<dbReference type="OMA" id="FLQLDHT"/>
<dbReference type="OrthoDB" id="120383at2759"/>
<dbReference type="PAN-GO" id="Q6ZW31">
    <property type="GO annotations" value="4 GO annotations based on evolutionary models"/>
</dbReference>
<dbReference type="PhylomeDB" id="Q6ZW31"/>
<dbReference type="TreeFam" id="TF323458"/>
<dbReference type="PathwayCommons" id="Q6ZW31"/>
<dbReference type="Reactome" id="R-HSA-9013148">
    <property type="pathway name" value="CDC42 GTPase cycle"/>
</dbReference>
<dbReference type="Reactome" id="R-HSA-9013404">
    <property type="pathway name" value="RAC2 GTPase cycle"/>
</dbReference>
<dbReference type="Reactome" id="R-HSA-9013406">
    <property type="pathway name" value="RHOQ GTPase cycle"/>
</dbReference>
<dbReference type="Reactome" id="R-HSA-9013409">
    <property type="pathway name" value="RHOJ GTPase cycle"/>
</dbReference>
<dbReference type="Reactome" id="R-HSA-9013423">
    <property type="pathway name" value="RAC3 GTPase cycle"/>
</dbReference>
<dbReference type="Reactome" id="R-HSA-9035034">
    <property type="pathway name" value="RHOF GTPase cycle"/>
</dbReference>
<dbReference type="SignaLink" id="Q6ZW31"/>
<dbReference type="BioGRID-ORCS" id="85360">
    <property type="hits" value="13 hits in 1142 CRISPR screens"/>
</dbReference>
<dbReference type="ChiTaRS" id="SYDE1">
    <property type="organism name" value="human"/>
</dbReference>
<dbReference type="GenomeRNAi" id="85360"/>
<dbReference type="Pharos" id="Q6ZW31">
    <property type="development level" value="Tbio"/>
</dbReference>
<dbReference type="PRO" id="PR:Q6ZW31"/>
<dbReference type="Proteomes" id="UP000005640">
    <property type="component" value="Chromosome 19"/>
</dbReference>
<dbReference type="RNAct" id="Q6ZW31">
    <property type="molecule type" value="protein"/>
</dbReference>
<dbReference type="Bgee" id="ENSG00000105137">
    <property type="expression patterns" value="Expressed in decidua and 187 other cell types or tissues"/>
</dbReference>
<dbReference type="ExpressionAtlas" id="Q6ZW31">
    <property type="expression patterns" value="baseline and differential"/>
</dbReference>
<dbReference type="GO" id="GO:0097060">
    <property type="term" value="C:synaptic membrane"/>
    <property type="evidence" value="ECO:0000318"/>
    <property type="project" value="GO_Central"/>
</dbReference>
<dbReference type="GO" id="GO:0005096">
    <property type="term" value="F:GTPase activator activity"/>
    <property type="evidence" value="ECO:0000314"/>
    <property type="project" value="MGI"/>
</dbReference>
<dbReference type="GO" id="GO:0030695">
    <property type="term" value="F:GTPase regulator activity"/>
    <property type="evidence" value="ECO:0000314"/>
    <property type="project" value="MGI"/>
</dbReference>
<dbReference type="GO" id="GO:0030036">
    <property type="term" value="P:actin cytoskeleton organization"/>
    <property type="evidence" value="ECO:0000314"/>
    <property type="project" value="MGI"/>
</dbReference>
<dbReference type="GO" id="GO:0090630">
    <property type="term" value="P:activation of GTPase activity"/>
    <property type="evidence" value="ECO:0000250"/>
    <property type="project" value="UniProtKB"/>
</dbReference>
<dbReference type="GO" id="GO:0016477">
    <property type="term" value="P:cell migration"/>
    <property type="evidence" value="ECO:0000314"/>
    <property type="project" value="MGI"/>
</dbReference>
<dbReference type="GO" id="GO:1901165">
    <property type="term" value="P:positive regulation of trophoblast cell migration"/>
    <property type="evidence" value="ECO:0000315"/>
    <property type="project" value="UniProtKB"/>
</dbReference>
<dbReference type="GO" id="GO:0051493">
    <property type="term" value="P:regulation of cytoskeleton organization"/>
    <property type="evidence" value="ECO:0000315"/>
    <property type="project" value="UniProtKB"/>
</dbReference>
<dbReference type="GO" id="GO:0046578">
    <property type="term" value="P:regulation of Ras protein signal transduction"/>
    <property type="evidence" value="ECO:0000318"/>
    <property type="project" value="GO_Central"/>
</dbReference>
<dbReference type="GO" id="GO:0007165">
    <property type="term" value="P:signal transduction"/>
    <property type="evidence" value="ECO:0007669"/>
    <property type="project" value="InterPro"/>
</dbReference>
<dbReference type="FunFam" id="1.10.555.10:FF:000051">
    <property type="entry name" value="Synapse defective Rho GTPase homolog 1"/>
    <property type="match status" value="1"/>
</dbReference>
<dbReference type="Gene3D" id="1.10.555.10">
    <property type="entry name" value="Rho GTPase activation protein"/>
    <property type="match status" value="1"/>
</dbReference>
<dbReference type="InterPro" id="IPR000008">
    <property type="entry name" value="C2_dom"/>
</dbReference>
<dbReference type="InterPro" id="IPR052118">
    <property type="entry name" value="Rho-GAP_regulator"/>
</dbReference>
<dbReference type="InterPro" id="IPR008936">
    <property type="entry name" value="Rho_GTPase_activation_prot"/>
</dbReference>
<dbReference type="InterPro" id="IPR000198">
    <property type="entry name" value="RhoGAP_dom"/>
</dbReference>
<dbReference type="PANTHER" id="PTHR46150">
    <property type="entry name" value="RHO GTPASE-ACTIVATING PROTEIN 100F"/>
    <property type="match status" value="1"/>
</dbReference>
<dbReference type="PANTHER" id="PTHR46150:SF2">
    <property type="entry name" value="RHO GTPASE-ACTIVATING PROTEIN SYDE1"/>
    <property type="match status" value="1"/>
</dbReference>
<dbReference type="Pfam" id="PF25336">
    <property type="entry name" value="C2_SYDE"/>
    <property type="match status" value="1"/>
</dbReference>
<dbReference type="Pfam" id="PF00620">
    <property type="entry name" value="RhoGAP"/>
    <property type="match status" value="1"/>
</dbReference>
<dbReference type="SMART" id="SM00324">
    <property type="entry name" value="RhoGAP"/>
    <property type="match status" value="1"/>
</dbReference>
<dbReference type="SUPFAM" id="SSF48350">
    <property type="entry name" value="GTPase activation domain, GAP"/>
    <property type="match status" value="1"/>
</dbReference>
<dbReference type="PROSITE" id="PS50004">
    <property type="entry name" value="C2"/>
    <property type="match status" value="1"/>
</dbReference>
<dbReference type="PROSITE" id="PS50238">
    <property type="entry name" value="RHOGAP"/>
    <property type="match status" value="1"/>
</dbReference>
<reference key="1">
    <citation type="journal article" date="2004" name="Nat. Genet.">
        <title>Complete sequencing and characterization of 21,243 full-length human cDNAs.</title>
        <authorList>
            <person name="Ota T."/>
            <person name="Suzuki Y."/>
            <person name="Nishikawa T."/>
            <person name="Otsuki T."/>
            <person name="Sugiyama T."/>
            <person name="Irie R."/>
            <person name="Wakamatsu A."/>
            <person name="Hayashi K."/>
            <person name="Sato H."/>
            <person name="Nagai K."/>
            <person name="Kimura K."/>
            <person name="Makita H."/>
            <person name="Sekine M."/>
            <person name="Obayashi M."/>
            <person name="Nishi T."/>
            <person name="Shibahara T."/>
            <person name="Tanaka T."/>
            <person name="Ishii S."/>
            <person name="Yamamoto J."/>
            <person name="Saito K."/>
            <person name="Kawai Y."/>
            <person name="Isono Y."/>
            <person name="Nakamura Y."/>
            <person name="Nagahari K."/>
            <person name="Murakami K."/>
            <person name="Yasuda T."/>
            <person name="Iwayanagi T."/>
            <person name="Wagatsuma M."/>
            <person name="Shiratori A."/>
            <person name="Sudo H."/>
            <person name="Hosoiri T."/>
            <person name="Kaku Y."/>
            <person name="Kodaira H."/>
            <person name="Kondo H."/>
            <person name="Sugawara M."/>
            <person name="Takahashi M."/>
            <person name="Kanda K."/>
            <person name="Yokoi T."/>
            <person name="Furuya T."/>
            <person name="Kikkawa E."/>
            <person name="Omura Y."/>
            <person name="Abe K."/>
            <person name="Kamihara K."/>
            <person name="Katsuta N."/>
            <person name="Sato K."/>
            <person name="Tanikawa M."/>
            <person name="Yamazaki M."/>
            <person name="Ninomiya K."/>
            <person name="Ishibashi T."/>
            <person name="Yamashita H."/>
            <person name="Murakawa K."/>
            <person name="Fujimori K."/>
            <person name="Tanai H."/>
            <person name="Kimata M."/>
            <person name="Watanabe M."/>
            <person name="Hiraoka S."/>
            <person name="Chiba Y."/>
            <person name="Ishida S."/>
            <person name="Ono Y."/>
            <person name="Takiguchi S."/>
            <person name="Watanabe S."/>
            <person name="Yosida M."/>
            <person name="Hotuta T."/>
            <person name="Kusano J."/>
            <person name="Kanehori K."/>
            <person name="Takahashi-Fujii A."/>
            <person name="Hara H."/>
            <person name="Tanase T.-O."/>
            <person name="Nomura Y."/>
            <person name="Togiya S."/>
            <person name="Komai F."/>
            <person name="Hara R."/>
            <person name="Takeuchi K."/>
            <person name="Arita M."/>
            <person name="Imose N."/>
            <person name="Musashino K."/>
            <person name="Yuuki H."/>
            <person name="Oshima A."/>
            <person name="Sasaki N."/>
            <person name="Aotsuka S."/>
            <person name="Yoshikawa Y."/>
            <person name="Matsunawa H."/>
            <person name="Ichihara T."/>
            <person name="Shiohata N."/>
            <person name="Sano S."/>
            <person name="Moriya S."/>
            <person name="Momiyama H."/>
            <person name="Satoh N."/>
            <person name="Takami S."/>
            <person name="Terashima Y."/>
            <person name="Suzuki O."/>
            <person name="Nakagawa S."/>
            <person name="Senoh A."/>
            <person name="Mizoguchi H."/>
            <person name="Goto Y."/>
            <person name="Shimizu F."/>
            <person name="Wakebe H."/>
            <person name="Hishigaki H."/>
            <person name="Watanabe T."/>
            <person name="Sugiyama A."/>
            <person name="Takemoto M."/>
            <person name="Kawakami B."/>
            <person name="Yamazaki M."/>
            <person name="Watanabe K."/>
            <person name="Kumagai A."/>
            <person name="Itakura S."/>
            <person name="Fukuzumi Y."/>
            <person name="Fujimori Y."/>
            <person name="Komiyama M."/>
            <person name="Tashiro H."/>
            <person name="Tanigami A."/>
            <person name="Fujiwara T."/>
            <person name="Ono T."/>
            <person name="Yamada K."/>
            <person name="Fujii Y."/>
            <person name="Ozaki K."/>
            <person name="Hirao M."/>
            <person name="Ohmori Y."/>
            <person name="Kawabata A."/>
            <person name="Hikiji T."/>
            <person name="Kobatake N."/>
            <person name="Inagaki H."/>
            <person name="Ikema Y."/>
            <person name="Okamoto S."/>
            <person name="Okitani R."/>
            <person name="Kawakami T."/>
            <person name="Noguchi S."/>
            <person name="Itoh T."/>
            <person name="Shigeta K."/>
            <person name="Senba T."/>
            <person name="Matsumura K."/>
            <person name="Nakajima Y."/>
            <person name="Mizuno T."/>
            <person name="Morinaga M."/>
            <person name="Sasaki M."/>
            <person name="Togashi T."/>
            <person name="Oyama M."/>
            <person name="Hata H."/>
            <person name="Watanabe M."/>
            <person name="Komatsu T."/>
            <person name="Mizushima-Sugano J."/>
            <person name="Satoh T."/>
            <person name="Shirai Y."/>
            <person name="Takahashi Y."/>
            <person name="Nakagawa K."/>
            <person name="Okumura K."/>
            <person name="Nagase T."/>
            <person name="Nomura N."/>
            <person name="Kikuchi H."/>
            <person name="Masuho Y."/>
            <person name="Yamashita R."/>
            <person name="Nakai K."/>
            <person name="Yada T."/>
            <person name="Nakamura Y."/>
            <person name="Ohara O."/>
            <person name="Isogai T."/>
            <person name="Sugano S."/>
        </authorList>
    </citation>
    <scope>NUCLEOTIDE SEQUENCE [LARGE SCALE MRNA] (ISOFORM 1)</scope>
    <source>
        <tissue>Placenta</tissue>
    </source>
</reference>
<reference key="2">
    <citation type="submission" date="2005-07" db="EMBL/GenBank/DDBJ databases">
        <authorList>
            <person name="Mural R.J."/>
            <person name="Istrail S."/>
            <person name="Sutton G.G."/>
            <person name="Florea L."/>
            <person name="Halpern A.L."/>
            <person name="Mobarry C.M."/>
            <person name="Lippert R."/>
            <person name="Walenz B."/>
            <person name="Shatkay H."/>
            <person name="Dew I."/>
            <person name="Miller J.R."/>
            <person name="Flanigan M.J."/>
            <person name="Edwards N.J."/>
            <person name="Bolanos R."/>
            <person name="Fasulo D."/>
            <person name="Halldorsson B.V."/>
            <person name="Hannenhalli S."/>
            <person name="Turner R."/>
            <person name="Yooseph S."/>
            <person name="Lu F."/>
            <person name="Nusskern D.R."/>
            <person name="Shue B.C."/>
            <person name="Zheng X.H."/>
            <person name="Zhong F."/>
            <person name="Delcher A.L."/>
            <person name="Huson D.H."/>
            <person name="Kravitz S.A."/>
            <person name="Mouchard L."/>
            <person name="Reinert K."/>
            <person name="Remington K.A."/>
            <person name="Clark A.G."/>
            <person name="Waterman M.S."/>
            <person name="Eichler E.E."/>
            <person name="Adams M.D."/>
            <person name="Hunkapiller M.W."/>
            <person name="Myers E.W."/>
            <person name="Venter J.C."/>
        </authorList>
    </citation>
    <scope>NUCLEOTIDE SEQUENCE [LARGE SCALE GENOMIC DNA]</scope>
</reference>
<reference key="3">
    <citation type="journal article" date="2004" name="Genome Res.">
        <title>The status, quality, and expansion of the NIH full-length cDNA project: the Mammalian Gene Collection (MGC).</title>
        <authorList>
            <consortium name="The MGC Project Team"/>
        </authorList>
    </citation>
    <scope>NUCLEOTIDE SEQUENCE [LARGE SCALE MRNA] (ISOFORM 2)</scope>
    <source>
        <tissue>Cervix</tissue>
        <tissue>Muscle</tissue>
    </source>
</reference>
<reference key="4">
    <citation type="journal article" date="2008" name="Proc. Natl. Acad. Sci. U.S.A.">
        <title>A quantitative atlas of mitotic phosphorylation.</title>
        <authorList>
            <person name="Dephoure N."/>
            <person name="Zhou C."/>
            <person name="Villen J."/>
            <person name="Beausoleil S.A."/>
            <person name="Bakalarski C.E."/>
            <person name="Elledge S.J."/>
            <person name="Gygi S.P."/>
        </authorList>
    </citation>
    <scope>PHOSPHORYLATION [LARGE SCALE ANALYSIS] AT SER-231; SER-235; SER-244 AND SER-683</scope>
    <scope>IDENTIFICATION BY MASS SPECTROMETRY [LARGE SCALE ANALYSIS]</scope>
    <source>
        <tissue>Cervix carcinoma</tissue>
    </source>
</reference>
<reference key="5">
    <citation type="journal article" date="2013" name="J. Proteome Res.">
        <title>Toward a comprehensive characterization of a human cancer cell phosphoproteome.</title>
        <authorList>
            <person name="Zhou H."/>
            <person name="Di Palma S."/>
            <person name="Preisinger C."/>
            <person name="Peng M."/>
            <person name="Polat A.N."/>
            <person name="Heck A.J."/>
            <person name="Mohammed S."/>
        </authorList>
    </citation>
    <scope>PHOSPHORYLATION [LARGE SCALE ANALYSIS] AT SER-224 AND SER-575</scope>
    <scope>IDENTIFICATION BY MASS SPECTROMETRY [LARGE SCALE ANALYSIS]</scope>
    <source>
        <tissue>Cervix carcinoma</tissue>
    </source>
</reference>
<reference key="6">
    <citation type="journal article" date="2014" name="J. Proteomics">
        <title>An enzyme assisted RP-RPLC approach for in-depth analysis of human liver phosphoproteome.</title>
        <authorList>
            <person name="Bian Y."/>
            <person name="Song C."/>
            <person name="Cheng K."/>
            <person name="Dong M."/>
            <person name="Wang F."/>
            <person name="Huang J."/>
            <person name="Sun D."/>
            <person name="Wang L."/>
            <person name="Ye M."/>
            <person name="Zou H."/>
        </authorList>
    </citation>
    <scope>PHOSPHORYLATION [LARGE SCALE ANALYSIS] AT SER-683</scope>
    <scope>IDENTIFICATION BY MASS SPECTROMETRY [LARGE SCALE ANALYSIS]</scope>
    <source>
        <tissue>Liver</tissue>
    </source>
</reference>
<reference key="7">
    <citation type="journal article" date="2017" name="J. Pathol.">
        <title>Association of dysfunctional synapse defective 1 (SYDE1) with restricted fetal growth - SYDE1 regulates placental cell migration and invasion.</title>
        <authorList>
            <person name="Lo H.F."/>
            <person name="Tsai C.Y."/>
            <person name="Chen C.P."/>
            <person name="Wang L.J."/>
            <person name="Lee Y.S."/>
            <person name="Chen C.Y."/>
            <person name="Liang C.T."/>
            <person name="Cheong M.L."/>
            <person name="Chen H."/>
        </authorList>
    </citation>
    <scope>FUNCTION</scope>
    <scope>TISSUE SPECIFICITY</scope>
</reference>
<reference key="8">
    <citation type="journal article" date="2008" name="Science">
        <title>Core signaling pathways in human pancreatic cancers revealed by global genomic analyses.</title>
        <authorList>
            <person name="Jones S."/>
            <person name="Zhang X."/>
            <person name="Parsons D.W."/>
            <person name="Lin J.C."/>
            <person name="Leary R.J."/>
            <person name="Angenendt P."/>
            <person name="Mankoo P."/>
            <person name="Carter H."/>
            <person name="Kamiyama H."/>
            <person name="Jimeno A."/>
            <person name="Hong S.M."/>
            <person name="Fu B."/>
            <person name="Lin M.T."/>
            <person name="Calhoun E.S."/>
            <person name="Kamiyama M."/>
            <person name="Walter K."/>
            <person name="Nikolskaya T."/>
            <person name="Nikolsky Y."/>
            <person name="Hartigan J."/>
            <person name="Smith D.R."/>
            <person name="Hidalgo M."/>
            <person name="Leach S.D."/>
            <person name="Klein A.P."/>
            <person name="Jaffee E.M."/>
            <person name="Goggins M."/>
            <person name="Maitra A."/>
            <person name="Iacobuzio-Donahue C."/>
            <person name="Eshleman J.R."/>
            <person name="Kern S.E."/>
            <person name="Hruban R.H."/>
            <person name="Karchin R."/>
            <person name="Papadopoulos N."/>
            <person name="Parmigiani G."/>
            <person name="Vogelstein B."/>
            <person name="Velculescu V.E."/>
            <person name="Kinzler K.W."/>
        </authorList>
    </citation>
    <scope>VARIANT [LARGE SCALE ANALYSIS] GLN-408</scope>
</reference>
<feature type="chain" id="PRO_0000312158" description="Rho GTPase-activating protein SYDE1">
    <location>
        <begin position="1"/>
        <end position="735"/>
    </location>
</feature>
<feature type="domain" description="C2" evidence="3">
    <location>
        <begin position="249"/>
        <end position="366"/>
    </location>
</feature>
<feature type="domain" description="Rho-GAP" evidence="4">
    <location>
        <begin position="398"/>
        <end position="604"/>
    </location>
</feature>
<feature type="region of interest" description="Disordered" evidence="5">
    <location>
        <begin position="1"/>
        <end position="253"/>
    </location>
</feature>
<feature type="region of interest" description="Disordered" evidence="5">
    <location>
        <begin position="608"/>
        <end position="651"/>
    </location>
</feature>
<feature type="region of interest" description="Disordered" evidence="5">
    <location>
        <begin position="674"/>
        <end position="696"/>
    </location>
</feature>
<feature type="compositionally biased region" description="Basic and acidic residues" evidence="5">
    <location>
        <begin position="14"/>
        <end position="31"/>
    </location>
</feature>
<feature type="compositionally biased region" description="Pro residues" evidence="5">
    <location>
        <begin position="35"/>
        <end position="46"/>
    </location>
</feature>
<feature type="compositionally biased region" description="Low complexity" evidence="5">
    <location>
        <begin position="47"/>
        <end position="71"/>
    </location>
</feature>
<feature type="compositionally biased region" description="Pro residues" evidence="5">
    <location>
        <begin position="122"/>
        <end position="131"/>
    </location>
</feature>
<feature type="compositionally biased region" description="Gly residues" evidence="5">
    <location>
        <begin position="211"/>
        <end position="221"/>
    </location>
</feature>
<feature type="site" description="Arginine finger; crucial for GTP hydrolysis by stabilizing the transition state" evidence="4">
    <location>
        <position position="436"/>
    </location>
</feature>
<feature type="modified residue" description="Phosphoserine" evidence="10">
    <location>
        <position position="224"/>
    </location>
</feature>
<feature type="modified residue" description="Phosphoserine" evidence="9">
    <location>
        <position position="231"/>
    </location>
</feature>
<feature type="modified residue" description="Phosphoserine" evidence="9">
    <location>
        <position position="235"/>
    </location>
</feature>
<feature type="modified residue" description="Phosphoserine" evidence="9">
    <location>
        <position position="244"/>
    </location>
</feature>
<feature type="modified residue" description="Phosphoserine" evidence="10">
    <location>
        <position position="575"/>
    </location>
</feature>
<feature type="modified residue" description="Phosphoserine" evidence="2">
    <location>
        <position position="681"/>
    </location>
</feature>
<feature type="modified residue" description="Phosphoserine" evidence="9 11">
    <location>
        <position position="683"/>
    </location>
</feature>
<feature type="splice variant" id="VSP_029717" description="In isoform 2." evidence="8">
    <location>
        <begin position="30"/>
        <end position="96"/>
    </location>
</feature>
<feature type="sequence variant" id="VAR_062661" description="In a pancreatic ductal adenocarcinoma sample; somatic mutation; dbSNP:rs772906202." evidence="6">
    <original>R</original>
    <variation>Q</variation>
    <location>
        <position position="408"/>
    </location>
</feature>
<gene>
    <name type="primary">SYDE1</name>
</gene>
<organism>
    <name type="scientific">Homo sapiens</name>
    <name type="common">Human</name>
    <dbReference type="NCBI Taxonomy" id="9606"/>
    <lineage>
        <taxon>Eukaryota</taxon>
        <taxon>Metazoa</taxon>
        <taxon>Chordata</taxon>
        <taxon>Craniata</taxon>
        <taxon>Vertebrata</taxon>
        <taxon>Euteleostomi</taxon>
        <taxon>Mammalia</taxon>
        <taxon>Eutheria</taxon>
        <taxon>Euarchontoglires</taxon>
        <taxon>Primates</taxon>
        <taxon>Haplorrhini</taxon>
        <taxon>Catarrhini</taxon>
        <taxon>Hominidae</taxon>
        <taxon>Homo</taxon>
    </lineage>
</organism>
<protein>
    <recommendedName>
        <fullName>Rho GTPase-activating protein SYDE1</fullName>
    </recommendedName>
    <alternativeName>
        <fullName>Synapse defective protein 1 homolog 1</fullName>
        <shortName>Protein syd-1 homolog 1</shortName>
    </alternativeName>
</protein>
<name>SYDE1_HUMAN</name>